<evidence type="ECO:0000255" key="1">
    <source>
        <dbReference type="HAMAP-Rule" id="MF_01161"/>
    </source>
</evidence>
<reference key="1">
    <citation type="submission" date="2007-03" db="EMBL/GenBank/DDBJ databases">
        <authorList>
            <person name="Heidelberg J."/>
        </authorList>
    </citation>
    <scope>NUCLEOTIDE SEQUENCE [LARGE SCALE GENOMIC DNA]</scope>
    <source>
        <strain>ATCC 39541 / Classical Ogawa 395 / O395</strain>
    </source>
</reference>
<reference key="2">
    <citation type="journal article" date="2008" name="PLoS ONE">
        <title>A recalibrated molecular clock and independent origins for the cholera pandemic clones.</title>
        <authorList>
            <person name="Feng L."/>
            <person name="Reeves P.R."/>
            <person name="Lan R."/>
            <person name="Ren Y."/>
            <person name="Gao C."/>
            <person name="Zhou Z."/>
            <person name="Ren Y."/>
            <person name="Cheng J."/>
            <person name="Wang W."/>
            <person name="Wang J."/>
            <person name="Qian W."/>
            <person name="Li D."/>
            <person name="Wang L."/>
        </authorList>
    </citation>
    <scope>NUCLEOTIDE SEQUENCE [LARGE SCALE GENOMIC DNA]</scope>
    <source>
        <strain>ATCC 39541 / Classical Ogawa 395 / O395</strain>
    </source>
</reference>
<keyword id="KW-0067">ATP-binding</keyword>
<keyword id="KW-0963">Cytoplasm</keyword>
<keyword id="KW-0436">Ligase</keyword>
<keyword id="KW-0547">Nucleotide-binding</keyword>
<keyword id="KW-0819">tRNA processing</keyword>
<comment type="function">
    <text evidence="1">Ligates lysine onto the cytidine present at position 34 of the AUA codon-specific tRNA(Ile) that contains the anticodon CAU, in an ATP-dependent manner. Cytidine is converted to lysidine, thus changing the amino acid specificity of the tRNA from methionine to isoleucine.</text>
</comment>
<comment type="catalytic activity">
    <reaction evidence="1">
        <text>cytidine(34) in tRNA(Ile2) + L-lysine + ATP = lysidine(34) in tRNA(Ile2) + AMP + diphosphate + H(+)</text>
        <dbReference type="Rhea" id="RHEA:43744"/>
        <dbReference type="Rhea" id="RHEA-COMP:10625"/>
        <dbReference type="Rhea" id="RHEA-COMP:10670"/>
        <dbReference type="ChEBI" id="CHEBI:15378"/>
        <dbReference type="ChEBI" id="CHEBI:30616"/>
        <dbReference type="ChEBI" id="CHEBI:32551"/>
        <dbReference type="ChEBI" id="CHEBI:33019"/>
        <dbReference type="ChEBI" id="CHEBI:82748"/>
        <dbReference type="ChEBI" id="CHEBI:83665"/>
        <dbReference type="ChEBI" id="CHEBI:456215"/>
        <dbReference type="EC" id="6.3.4.19"/>
    </reaction>
</comment>
<comment type="subcellular location">
    <subcellularLocation>
        <location evidence="1">Cytoplasm</location>
    </subcellularLocation>
</comment>
<comment type="domain">
    <text>The N-terminal region contains the highly conserved SGGXDS motif, predicted to be a P-loop motif involved in ATP binding.</text>
</comment>
<comment type="similarity">
    <text evidence="1">Belongs to the tRNA(Ile)-lysidine synthase family.</text>
</comment>
<accession>A5F623</accession>
<accession>C3M3J9</accession>
<dbReference type="EC" id="6.3.4.19" evidence="1"/>
<dbReference type="EMBL" id="CP000627">
    <property type="protein sequence ID" value="ABQ20758.1"/>
    <property type="molecule type" value="Genomic_DNA"/>
</dbReference>
<dbReference type="EMBL" id="CP001235">
    <property type="protein sequence ID" value="ACP10348.1"/>
    <property type="molecule type" value="Genomic_DNA"/>
</dbReference>
<dbReference type="RefSeq" id="WP_000342512.1">
    <property type="nucleotide sequence ID" value="NZ_JAACZH010000022.1"/>
</dbReference>
<dbReference type="SMR" id="A5F623"/>
<dbReference type="KEGG" id="vco:VC0395_A1834"/>
<dbReference type="KEGG" id="vcr:VC395_2358"/>
<dbReference type="PATRIC" id="fig|345073.21.peg.2274"/>
<dbReference type="eggNOG" id="COG0037">
    <property type="taxonomic scope" value="Bacteria"/>
</dbReference>
<dbReference type="HOGENOM" id="CLU_018869_2_0_6"/>
<dbReference type="OrthoDB" id="9807403at2"/>
<dbReference type="Proteomes" id="UP000000249">
    <property type="component" value="Chromosome 2"/>
</dbReference>
<dbReference type="GO" id="GO:0005737">
    <property type="term" value="C:cytoplasm"/>
    <property type="evidence" value="ECO:0007669"/>
    <property type="project" value="UniProtKB-SubCell"/>
</dbReference>
<dbReference type="GO" id="GO:0005524">
    <property type="term" value="F:ATP binding"/>
    <property type="evidence" value="ECO:0007669"/>
    <property type="project" value="UniProtKB-UniRule"/>
</dbReference>
<dbReference type="GO" id="GO:0032267">
    <property type="term" value="F:tRNA(Ile)-lysidine synthase activity"/>
    <property type="evidence" value="ECO:0007669"/>
    <property type="project" value="UniProtKB-EC"/>
</dbReference>
<dbReference type="GO" id="GO:0006400">
    <property type="term" value="P:tRNA modification"/>
    <property type="evidence" value="ECO:0007669"/>
    <property type="project" value="UniProtKB-UniRule"/>
</dbReference>
<dbReference type="CDD" id="cd01992">
    <property type="entry name" value="TilS_N"/>
    <property type="match status" value="1"/>
</dbReference>
<dbReference type="Gene3D" id="1.20.59.20">
    <property type="match status" value="1"/>
</dbReference>
<dbReference type="Gene3D" id="3.40.50.620">
    <property type="entry name" value="HUPs"/>
    <property type="match status" value="1"/>
</dbReference>
<dbReference type="HAMAP" id="MF_01161">
    <property type="entry name" value="tRNA_Ile_lys_synt"/>
    <property type="match status" value="1"/>
</dbReference>
<dbReference type="InterPro" id="IPR012796">
    <property type="entry name" value="Lysidine-tRNA-synth_C"/>
</dbReference>
<dbReference type="InterPro" id="IPR014729">
    <property type="entry name" value="Rossmann-like_a/b/a_fold"/>
</dbReference>
<dbReference type="InterPro" id="IPR011063">
    <property type="entry name" value="TilS/TtcA_N"/>
</dbReference>
<dbReference type="InterPro" id="IPR012094">
    <property type="entry name" value="tRNA_Ile_lys_synt"/>
</dbReference>
<dbReference type="InterPro" id="IPR012795">
    <property type="entry name" value="tRNA_Ile_lys_synt_N"/>
</dbReference>
<dbReference type="InterPro" id="IPR015262">
    <property type="entry name" value="tRNA_Ile_lys_synt_subst-bd"/>
</dbReference>
<dbReference type="NCBIfam" id="TIGR02433">
    <property type="entry name" value="lysidine_TilS_C"/>
    <property type="match status" value="1"/>
</dbReference>
<dbReference type="NCBIfam" id="TIGR02432">
    <property type="entry name" value="lysidine_TilS_N"/>
    <property type="match status" value="1"/>
</dbReference>
<dbReference type="PANTHER" id="PTHR43033">
    <property type="entry name" value="TRNA(ILE)-LYSIDINE SYNTHASE-RELATED"/>
    <property type="match status" value="1"/>
</dbReference>
<dbReference type="PANTHER" id="PTHR43033:SF1">
    <property type="entry name" value="TRNA(ILE)-LYSIDINE SYNTHASE-RELATED"/>
    <property type="match status" value="1"/>
</dbReference>
<dbReference type="Pfam" id="PF01171">
    <property type="entry name" value="ATP_bind_3"/>
    <property type="match status" value="1"/>
</dbReference>
<dbReference type="Pfam" id="PF09179">
    <property type="entry name" value="TilS"/>
    <property type="match status" value="1"/>
</dbReference>
<dbReference type="Pfam" id="PF11734">
    <property type="entry name" value="TilS_C"/>
    <property type="match status" value="1"/>
</dbReference>
<dbReference type="SMART" id="SM00977">
    <property type="entry name" value="TilS_C"/>
    <property type="match status" value="1"/>
</dbReference>
<dbReference type="SUPFAM" id="SSF52402">
    <property type="entry name" value="Adenine nucleotide alpha hydrolases-like"/>
    <property type="match status" value="1"/>
</dbReference>
<dbReference type="SUPFAM" id="SSF82829">
    <property type="entry name" value="MesJ substrate recognition domain-like"/>
    <property type="match status" value="1"/>
</dbReference>
<dbReference type="SUPFAM" id="SSF56037">
    <property type="entry name" value="PheT/TilS domain"/>
    <property type="match status" value="1"/>
</dbReference>
<protein>
    <recommendedName>
        <fullName evidence="1">tRNA(Ile)-lysidine synthase</fullName>
        <ecNumber evidence="1">6.3.4.19</ecNumber>
    </recommendedName>
    <alternativeName>
        <fullName evidence="1">tRNA(Ile)-2-lysyl-cytidine synthase</fullName>
    </alternativeName>
    <alternativeName>
        <fullName evidence="1">tRNA(Ile)-lysidine synthetase</fullName>
    </alternativeName>
</protein>
<gene>
    <name evidence="1" type="primary">tilS</name>
    <name type="ordered locus">VC0395_A1834</name>
    <name type="ordered locus">VC395_2358</name>
</gene>
<organism>
    <name type="scientific">Vibrio cholerae serotype O1 (strain ATCC 39541 / Classical Ogawa 395 / O395)</name>
    <dbReference type="NCBI Taxonomy" id="345073"/>
    <lineage>
        <taxon>Bacteria</taxon>
        <taxon>Pseudomonadati</taxon>
        <taxon>Pseudomonadota</taxon>
        <taxon>Gammaproteobacteria</taxon>
        <taxon>Vibrionales</taxon>
        <taxon>Vibrionaceae</taxon>
        <taxon>Vibrio</taxon>
    </lineage>
</organism>
<sequence length="440" mass="49913">MDDLYLHFVQQLARYPFRKILLALSGGVDSQVLLALLARGRDEFGWDVTAVHVHHGLSPNADQWAQHCQRCCREVGMACQIEYVQLDVASGESIEKLAREARYRVLAPHVNAQTLLLLGQHADDQLETFLLALKRGSGPKGLAAMAAYAPFAEGHLLRPLLTVSRQHIEAYAKQHKLTWVIDESNADIRYERNFLRHQVTPVLTERWPSIRQAVQRSAELCAEQEALLQEFLAEALKKAITAEGGLSIAVLAEGSEGMRRQLIRAWFAHHRLPMPSRQHTERIWCEVALASEDANPKLKLNHIEVRRFQHCLYLVPPEKDLSGWRSALVPEQRLPLPQGLGHLQLTSKAGGNIKLPDDPSQLWVSFEPQGLEACPVGRVGSRKLKKLFQEYGVPSWRRRQTPILMYQNRVVCVADLFVDRDWSGQDCELVWFKSHDSVPK</sequence>
<feature type="chain" id="PRO_1000073076" description="tRNA(Ile)-lysidine synthase">
    <location>
        <begin position="1"/>
        <end position="440"/>
    </location>
</feature>
<feature type="binding site" evidence="1">
    <location>
        <begin position="25"/>
        <end position="30"/>
    </location>
    <ligand>
        <name>ATP</name>
        <dbReference type="ChEBI" id="CHEBI:30616"/>
    </ligand>
</feature>
<proteinExistence type="inferred from homology"/>
<name>TILS_VIBC3</name>